<accession>P44436</accession>
<organism>
    <name type="scientific">Haemophilus influenzae (strain ATCC 51907 / DSM 11121 / KW20 / Rd)</name>
    <dbReference type="NCBI Taxonomy" id="71421"/>
    <lineage>
        <taxon>Bacteria</taxon>
        <taxon>Pseudomonadati</taxon>
        <taxon>Pseudomonadota</taxon>
        <taxon>Gammaproteobacteria</taxon>
        <taxon>Pasteurellales</taxon>
        <taxon>Pasteurellaceae</taxon>
        <taxon>Haemophilus</taxon>
    </lineage>
</organism>
<reference key="1">
    <citation type="journal article" date="1995" name="Science">
        <title>Whole-genome random sequencing and assembly of Haemophilus influenzae Rd.</title>
        <authorList>
            <person name="Fleischmann R.D."/>
            <person name="Adams M.D."/>
            <person name="White O."/>
            <person name="Clayton R.A."/>
            <person name="Kirkness E.F."/>
            <person name="Kerlavage A.R."/>
            <person name="Bult C.J."/>
            <person name="Tomb J.-F."/>
            <person name="Dougherty B.A."/>
            <person name="Merrick J.M."/>
            <person name="McKenney K."/>
            <person name="Sutton G.G."/>
            <person name="FitzHugh W."/>
            <person name="Fields C.A."/>
            <person name="Gocayne J.D."/>
            <person name="Scott J.D."/>
            <person name="Shirley R."/>
            <person name="Liu L.-I."/>
            <person name="Glodek A."/>
            <person name="Kelley J.M."/>
            <person name="Weidman J.F."/>
            <person name="Phillips C.A."/>
            <person name="Spriggs T."/>
            <person name="Hedblom E."/>
            <person name="Cotton M.D."/>
            <person name="Utterback T.R."/>
            <person name="Hanna M.C."/>
            <person name="Nguyen D.T."/>
            <person name="Saudek D.M."/>
            <person name="Brandon R.C."/>
            <person name="Fine L.D."/>
            <person name="Fritchman J.L."/>
            <person name="Fuhrmann J.L."/>
            <person name="Geoghagen N.S.M."/>
            <person name="Gnehm C.L."/>
            <person name="McDonald L.A."/>
            <person name="Small K.V."/>
            <person name="Fraser C.M."/>
            <person name="Smith H.O."/>
            <person name="Venter J.C."/>
        </authorList>
    </citation>
    <scope>NUCLEOTIDE SEQUENCE [LARGE SCALE GENOMIC DNA]</scope>
    <source>
        <strain>ATCC 51907 / DSM 11121 / KW20 / Rd</strain>
    </source>
</reference>
<comment type="function">
    <text evidence="1">IGPS catalyzes the conversion of PRFAR and glutamine to IGP, AICAR and glutamate. The HisF subunit catalyzes the cyclization activity that produces IGP and AICAR from PRFAR using the ammonia provided by the HisH subunit (By similarity).</text>
</comment>
<comment type="catalytic activity">
    <reaction>
        <text>5-[(5-phospho-1-deoxy-D-ribulos-1-ylimino)methylamino]-1-(5-phospho-beta-D-ribosyl)imidazole-4-carboxamide + L-glutamine = D-erythro-1-(imidazol-4-yl)glycerol 3-phosphate + 5-amino-1-(5-phospho-beta-D-ribosyl)imidazole-4-carboxamide + L-glutamate + H(+)</text>
        <dbReference type="Rhea" id="RHEA:24793"/>
        <dbReference type="ChEBI" id="CHEBI:15378"/>
        <dbReference type="ChEBI" id="CHEBI:29985"/>
        <dbReference type="ChEBI" id="CHEBI:58278"/>
        <dbReference type="ChEBI" id="CHEBI:58359"/>
        <dbReference type="ChEBI" id="CHEBI:58475"/>
        <dbReference type="ChEBI" id="CHEBI:58525"/>
        <dbReference type="EC" id="4.3.2.10"/>
    </reaction>
</comment>
<comment type="pathway">
    <text>Amino-acid biosynthesis; L-histidine biosynthesis; L-histidine from 5-phospho-alpha-D-ribose 1-diphosphate: step 5/9.</text>
</comment>
<comment type="subunit">
    <text evidence="1">Heterodimer of HisH and HisF.</text>
</comment>
<comment type="subcellular location">
    <subcellularLocation>
        <location evidence="1">Cytoplasm</location>
    </subcellularLocation>
</comment>
<comment type="similarity">
    <text evidence="3">Belongs to the HisA/HisF family.</text>
</comment>
<evidence type="ECO:0000250" key="1"/>
<evidence type="ECO:0000255" key="2"/>
<evidence type="ECO:0000305" key="3"/>
<gene>
    <name type="primary">hisF</name>
    <name type="ordered locus">HI_0474</name>
</gene>
<keyword id="KW-0028">Amino-acid biosynthesis</keyword>
<keyword id="KW-0963">Cytoplasm</keyword>
<keyword id="KW-0368">Histidine biosynthesis</keyword>
<keyword id="KW-0456">Lyase</keyword>
<keyword id="KW-1185">Reference proteome</keyword>
<feature type="chain" id="PRO_0000142163" description="Imidazole glycerol phosphate synthase subunit HisF">
    <location>
        <begin position="1"/>
        <end position="258"/>
    </location>
</feature>
<feature type="active site" evidence="2">
    <location>
        <position position="11"/>
    </location>
</feature>
<feature type="active site" evidence="2">
    <location>
        <position position="130"/>
    </location>
</feature>
<proteinExistence type="inferred from homology"/>
<protein>
    <recommendedName>
        <fullName>Imidazole glycerol phosphate synthase subunit HisF</fullName>
        <ecNumber>4.3.2.10</ecNumber>
    </recommendedName>
    <alternativeName>
        <fullName>IGP synthase cyclase subunit</fullName>
    </alternativeName>
    <alternativeName>
        <fullName>IGP synthase subunit HisF</fullName>
    </alternativeName>
    <alternativeName>
        <fullName>ImGP synthase subunit HisF</fullName>
        <shortName>IGPS subunit HisF</shortName>
    </alternativeName>
</protein>
<dbReference type="EC" id="4.3.2.10"/>
<dbReference type="EMBL" id="L42023">
    <property type="protein sequence ID" value="AAC22133.1"/>
    <property type="molecule type" value="Genomic_DNA"/>
</dbReference>
<dbReference type="PIR" id="I64070">
    <property type="entry name" value="I64070"/>
</dbReference>
<dbReference type="RefSeq" id="NP_438635.1">
    <property type="nucleotide sequence ID" value="NC_000907.1"/>
</dbReference>
<dbReference type="SMR" id="P44436"/>
<dbReference type="STRING" id="71421.HI_0474"/>
<dbReference type="EnsemblBacteria" id="AAC22133">
    <property type="protein sequence ID" value="AAC22133"/>
    <property type="gene ID" value="HI_0474"/>
</dbReference>
<dbReference type="KEGG" id="hin:HI_0474"/>
<dbReference type="PATRIC" id="fig|71421.8.peg.494"/>
<dbReference type="eggNOG" id="COG0107">
    <property type="taxonomic scope" value="Bacteria"/>
</dbReference>
<dbReference type="HOGENOM" id="CLU_048577_4_0_6"/>
<dbReference type="OrthoDB" id="9781903at2"/>
<dbReference type="PhylomeDB" id="P44436"/>
<dbReference type="BioCyc" id="HINF71421:G1GJ1-490-MONOMER"/>
<dbReference type="UniPathway" id="UPA00031">
    <property type="reaction ID" value="UER00010"/>
</dbReference>
<dbReference type="Proteomes" id="UP000000579">
    <property type="component" value="Chromosome"/>
</dbReference>
<dbReference type="GO" id="GO:0005737">
    <property type="term" value="C:cytoplasm"/>
    <property type="evidence" value="ECO:0007669"/>
    <property type="project" value="UniProtKB-SubCell"/>
</dbReference>
<dbReference type="GO" id="GO:0000107">
    <property type="term" value="F:imidazoleglycerol-phosphate synthase activity"/>
    <property type="evidence" value="ECO:0000318"/>
    <property type="project" value="GO_Central"/>
</dbReference>
<dbReference type="GO" id="GO:0016829">
    <property type="term" value="F:lyase activity"/>
    <property type="evidence" value="ECO:0007669"/>
    <property type="project" value="UniProtKB-KW"/>
</dbReference>
<dbReference type="GO" id="GO:0000105">
    <property type="term" value="P:L-histidine biosynthetic process"/>
    <property type="evidence" value="ECO:0007669"/>
    <property type="project" value="UniProtKB-UniRule"/>
</dbReference>
<dbReference type="CDD" id="cd04731">
    <property type="entry name" value="HisF"/>
    <property type="match status" value="1"/>
</dbReference>
<dbReference type="FunFam" id="3.20.20.70:FF:000006">
    <property type="entry name" value="Imidazole glycerol phosphate synthase subunit HisF"/>
    <property type="match status" value="1"/>
</dbReference>
<dbReference type="Gene3D" id="3.20.20.70">
    <property type="entry name" value="Aldolase class I"/>
    <property type="match status" value="1"/>
</dbReference>
<dbReference type="HAMAP" id="MF_01013">
    <property type="entry name" value="HisF"/>
    <property type="match status" value="1"/>
</dbReference>
<dbReference type="InterPro" id="IPR013785">
    <property type="entry name" value="Aldolase_TIM"/>
</dbReference>
<dbReference type="InterPro" id="IPR006062">
    <property type="entry name" value="His_biosynth"/>
</dbReference>
<dbReference type="InterPro" id="IPR004651">
    <property type="entry name" value="HisF"/>
</dbReference>
<dbReference type="InterPro" id="IPR050064">
    <property type="entry name" value="IGPS_HisA/HisF"/>
</dbReference>
<dbReference type="InterPro" id="IPR011060">
    <property type="entry name" value="RibuloseP-bd_barrel"/>
</dbReference>
<dbReference type="NCBIfam" id="TIGR00735">
    <property type="entry name" value="hisF"/>
    <property type="match status" value="1"/>
</dbReference>
<dbReference type="PANTHER" id="PTHR21235:SF2">
    <property type="entry name" value="IMIDAZOLE GLYCEROL PHOSPHATE SYNTHASE HISHF"/>
    <property type="match status" value="1"/>
</dbReference>
<dbReference type="PANTHER" id="PTHR21235">
    <property type="entry name" value="IMIDAZOLE GLYCEROL PHOSPHATE SYNTHASE SUBUNIT HISF/H IGP SYNTHASE SUBUNIT HISF/H"/>
    <property type="match status" value="1"/>
</dbReference>
<dbReference type="Pfam" id="PF00977">
    <property type="entry name" value="His_biosynth"/>
    <property type="match status" value="1"/>
</dbReference>
<dbReference type="SUPFAM" id="SSF51366">
    <property type="entry name" value="Ribulose-phoshate binding barrel"/>
    <property type="match status" value="1"/>
</dbReference>
<name>HIS6_HAEIN</name>
<sequence length="258" mass="28626">MLAKRIIPCLDVRDGQVVKGVQFRNHEIIGDIVPLAQRYAQEGADELVFYDITASSDGRTVDKSWVERIAQVIDIPFCVAGGIKTIEDAEKLFAFGADKISINSPALADPTLISRLADRFGVQAIVVGIDSWFEQETGKYWVNQYTGDETRTRQTHWQLLDWVKEVQQCGAGEIVLNMMNQDGLRNGYDLAQLKLVRGVCRVPLIASGGAGKMVHFRDAFIEAKVDGALAASVFHKQIIEIGELKSYLVQSAIEIRSE</sequence>